<feature type="signal peptide" evidence="1">
    <location>
        <begin position="1"/>
        <end position="24"/>
    </location>
</feature>
<feature type="chain" id="PRO_0000007391" description="Thiol:disulfide interchange protein DsbD">
    <location>
        <begin position="25"/>
        <end position="595"/>
    </location>
</feature>
<feature type="transmembrane region" description="Helical" evidence="1">
    <location>
        <begin position="200"/>
        <end position="222"/>
    </location>
</feature>
<feature type="transmembrane region" description="Helical" evidence="1">
    <location>
        <begin position="234"/>
        <end position="256"/>
    </location>
</feature>
<feature type="transmembrane region" description="Helical" evidence="1">
    <location>
        <begin position="271"/>
        <end position="293"/>
    </location>
</feature>
<feature type="transmembrane region" description="Helical" evidence="1">
    <location>
        <begin position="314"/>
        <end position="336"/>
    </location>
</feature>
<feature type="transmembrane region" description="Helical" evidence="1">
    <location>
        <begin position="356"/>
        <end position="378"/>
    </location>
</feature>
<feature type="transmembrane region" description="Helical" evidence="1">
    <location>
        <begin position="391"/>
        <end position="408"/>
    </location>
</feature>
<feature type="transmembrane region" description="Helical" evidence="1">
    <location>
        <begin position="412"/>
        <end position="431"/>
    </location>
</feature>
<feature type="transmembrane region" description="Helical" evidence="1">
    <location>
        <begin position="438"/>
        <end position="455"/>
    </location>
</feature>
<feature type="domain" description="Thioredoxin" evidence="1">
    <location>
        <begin position="452"/>
        <end position="592"/>
    </location>
</feature>
<feature type="region of interest" description="Disordered" evidence="2">
    <location>
        <begin position="166"/>
        <end position="186"/>
    </location>
</feature>
<feature type="disulfide bond" description="Redox-active" evidence="1">
    <location>
        <begin position="134"/>
        <end position="140"/>
    </location>
</feature>
<feature type="disulfide bond" description="Redox-active" evidence="1">
    <location>
        <begin position="209"/>
        <end position="331"/>
    </location>
</feature>
<feature type="disulfide bond" description="Redox-active" evidence="1">
    <location>
        <begin position="507"/>
        <end position="510"/>
    </location>
</feature>
<feature type="sequence conflict" description="In Ref. 3; AAS60769." evidence="3" ref="3">
    <original>P</original>
    <variation>Q</variation>
    <location>
        <position position="92"/>
    </location>
</feature>
<comment type="function">
    <text evidence="1">Required to facilitate the formation of correct disulfide bonds in some periplasmic proteins and for the assembly of the periplasmic c-type cytochromes. Acts by transferring electrons from cytoplasmic thioredoxin to the periplasm. This transfer involves a cascade of disulfide bond formation and reduction steps.</text>
</comment>
<comment type="catalytic activity">
    <reaction evidence="1">
        <text>[protein]-dithiol + NAD(+) = [protein]-disulfide + NADH + H(+)</text>
        <dbReference type="Rhea" id="RHEA:18749"/>
        <dbReference type="Rhea" id="RHEA-COMP:10593"/>
        <dbReference type="Rhea" id="RHEA-COMP:10594"/>
        <dbReference type="ChEBI" id="CHEBI:15378"/>
        <dbReference type="ChEBI" id="CHEBI:29950"/>
        <dbReference type="ChEBI" id="CHEBI:50058"/>
        <dbReference type="ChEBI" id="CHEBI:57540"/>
        <dbReference type="ChEBI" id="CHEBI:57945"/>
        <dbReference type="EC" id="1.8.1.8"/>
    </reaction>
</comment>
<comment type="catalytic activity">
    <reaction evidence="1">
        <text>[protein]-dithiol + NADP(+) = [protein]-disulfide + NADPH + H(+)</text>
        <dbReference type="Rhea" id="RHEA:18753"/>
        <dbReference type="Rhea" id="RHEA-COMP:10593"/>
        <dbReference type="Rhea" id="RHEA-COMP:10594"/>
        <dbReference type="ChEBI" id="CHEBI:15378"/>
        <dbReference type="ChEBI" id="CHEBI:29950"/>
        <dbReference type="ChEBI" id="CHEBI:50058"/>
        <dbReference type="ChEBI" id="CHEBI:57783"/>
        <dbReference type="ChEBI" id="CHEBI:58349"/>
        <dbReference type="EC" id="1.8.1.8"/>
    </reaction>
</comment>
<comment type="subcellular location">
    <subcellularLocation>
        <location evidence="1">Cell inner membrane</location>
        <topology evidence="1">Multi-pass membrane protein</topology>
    </subcellularLocation>
</comment>
<comment type="similarity">
    <text evidence="1">Belongs to the thioredoxin family. DsbD subfamily.</text>
</comment>
<reference key="1">
    <citation type="journal article" date="2001" name="Nature">
        <title>Genome sequence of Yersinia pestis, the causative agent of plague.</title>
        <authorList>
            <person name="Parkhill J."/>
            <person name="Wren B.W."/>
            <person name="Thomson N.R."/>
            <person name="Titball R.W."/>
            <person name="Holden M.T.G."/>
            <person name="Prentice M.B."/>
            <person name="Sebaihia M."/>
            <person name="James K.D."/>
            <person name="Churcher C.M."/>
            <person name="Mungall K.L."/>
            <person name="Baker S."/>
            <person name="Basham D."/>
            <person name="Bentley S.D."/>
            <person name="Brooks K."/>
            <person name="Cerdeno-Tarraga A.-M."/>
            <person name="Chillingworth T."/>
            <person name="Cronin A."/>
            <person name="Davies R.M."/>
            <person name="Davis P."/>
            <person name="Dougan G."/>
            <person name="Feltwell T."/>
            <person name="Hamlin N."/>
            <person name="Holroyd S."/>
            <person name="Jagels K."/>
            <person name="Karlyshev A.V."/>
            <person name="Leather S."/>
            <person name="Moule S."/>
            <person name="Oyston P.C.F."/>
            <person name="Quail M.A."/>
            <person name="Rutherford K.M."/>
            <person name="Simmonds M."/>
            <person name="Skelton J."/>
            <person name="Stevens K."/>
            <person name="Whitehead S."/>
            <person name="Barrell B.G."/>
        </authorList>
    </citation>
    <scope>NUCLEOTIDE SEQUENCE [LARGE SCALE GENOMIC DNA]</scope>
    <source>
        <strain>CO-92 / Biovar Orientalis</strain>
    </source>
</reference>
<reference key="2">
    <citation type="journal article" date="2002" name="J. Bacteriol.">
        <title>Genome sequence of Yersinia pestis KIM.</title>
        <authorList>
            <person name="Deng W."/>
            <person name="Burland V."/>
            <person name="Plunkett G. III"/>
            <person name="Boutin A."/>
            <person name="Mayhew G.F."/>
            <person name="Liss P."/>
            <person name="Perna N.T."/>
            <person name="Rose D.J."/>
            <person name="Mau B."/>
            <person name="Zhou S."/>
            <person name="Schwartz D.C."/>
            <person name="Fetherston J.D."/>
            <person name="Lindler L.E."/>
            <person name="Brubaker R.R."/>
            <person name="Plano G.V."/>
            <person name="Straley S.C."/>
            <person name="McDonough K.A."/>
            <person name="Nilles M.L."/>
            <person name="Matson J.S."/>
            <person name="Blattner F.R."/>
            <person name="Perry R.D."/>
        </authorList>
    </citation>
    <scope>NUCLEOTIDE SEQUENCE [LARGE SCALE GENOMIC DNA]</scope>
    <source>
        <strain>KIM10+ / Biovar Mediaevalis</strain>
    </source>
</reference>
<reference key="3">
    <citation type="journal article" date="2004" name="DNA Res.">
        <title>Complete genome sequence of Yersinia pestis strain 91001, an isolate avirulent to humans.</title>
        <authorList>
            <person name="Song Y."/>
            <person name="Tong Z."/>
            <person name="Wang J."/>
            <person name="Wang L."/>
            <person name="Guo Z."/>
            <person name="Han Y."/>
            <person name="Zhang J."/>
            <person name="Pei D."/>
            <person name="Zhou D."/>
            <person name="Qin H."/>
            <person name="Pang X."/>
            <person name="Han Y."/>
            <person name="Zhai J."/>
            <person name="Li M."/>
            <person name="Cui B."/>
            <person name="Qi Z."/>
            <person name="Jin L."/>
            <person name="Dai R."/>
            <person name="Chen F."/>
            <person name="Li S."/>
            <person name="Ye C."/>
            <person name="Du Z."/>
            <person name="Lin W."/>
            <person name="Wang J."/>
            <person name="Yu J."/>
            <person name="Yang H."/>
            <person name="Wang J."/>
            <person name="Huang P."/>
            <person name="Yang R."/>
        </authorList>
    </citation>
    <scope>NUCLEOTIDE SEQUENCE [LARGE SCALE GENOMIC DNA]</scope>
    <source>
        <strain>91001 / Biovar Mediaevalis</strain>
    </source>
</reference>
<gene>
    <name evidence="1" type="primary">dsbD</name>
    <name type="ordered locus">YPO0345</name>
    <name type="ordered locus">y0603</name>
    <name type="ordered locus">YP_0499</name>
</gene>
<keyword id="KW-0997">Cell inner membrane</keyword>
<keyword id="KW-1003">Cell membrane</keyword>
<keyword id="KW-0201">Cytochrome c-type biogenesis</keyword>
<keyword id="KW-1015">Disulfide bond</keyword>
<keyword id="KW-0249">Electron transport</keyword>
<keyword id="KW-0472">Membrane</keyword>
<keyword id="KW-0520">NAD</keyword>
<keyword id="KW-0560">Oxidoreductase</keyword>
<keyword id="KW-0676">Redox-active center</keyword>
<keyword id="KW-1185">Reference proteome</keyword>
<keyword id="KW-0732">Signal</keyword>
<keyword id="KW-0812">Transmembrane</keyword>
<keyword id="KW-1133">Transmembrane helix</keyword>
<keyword id="KW-0813">Transport</keyword>
<proteinExistence type="inferred from homology"/>
<accession>Q8ZIY9</accession>
<accession>Q0WJW5</accession>
<evidence type="ECO:0000255" key="1">
    <source>
        <dbReference type="HAMAP-Rule" id="MF_00399"/>
    </source>
</evidence>
<evidence type="ECO:0000256" key="2">
    <source>
        <dbReference type="SAM" id="MobiDB-lite"/>
    </source>
</evidence>
<evidence type="ECO:0000305" key="3"/>
<name>DSBD_YERPE</name>
<dbReference type="EC" id="1.8.1.8" evidence="1"/>
<dbReference type="EMBL" id="AL590842">
    <property type="protein sequence ID" value="CAL19027.1"/>
    <property type="molecule type" value="Genomic_DNA"/>
</dbReference>
<dbReference type="EMBL" id="AE009952">
    <property type="protein sequence ID" value="AAM84190.1"/>
    <property type="molecule type" value="Genomic_DNA"/>
</dbReference>
<dbReference type="EMBL" id="AE017042">
    <property type="protein sequence ID" value="AAS60769.1"/>
    <property type="molecule type" value="Genomic_DNA"/>
</dbReference>
<dbReference type="PIR" id="AI0042">
    <property type="entry name" value="AI0042"/>
</dbReference>
<dbReference type="RefSeq" id="WP_002209121.1">
    <property type="nucleotide sequence ID" value="NZ_WUCM01000014.1"/>
</dbReference>
<dbReference type="RefSeq" id="YP_002345423.1">
    <property type="nucleotide sequence ID" value="NC_003143.1"/>
</dbReference>
<dbReference type="SMR" id="Q8ZIY9"/>
<dbReference type="IntAct" id="Q8ZIY9">
    <property type="interactions" value="3"/>
</dbReference>
<dbReference type="STRING" id="214092.YPO0345"/>
<dbReference type="PaxDb" id="214092-YPO0345"/>
<dbReference type="DNASU" id="1145549"/>
<dbReference type="EnsemblBacteria" id="AAS60769">
    <property type="protein sequence ID" value="AAS60769"/>
    <property type="gene ID" value="YP_0499"/>
</dbReference>
<dbReference type="KEGG" id="ype:YPO0345"/>
<dbReference type="KEGG" id="ypk:y0603"/>
<dbReference type="KEGG" id="ypm:YP_0499"/>
<dbReference type="PATRIC" id="fig|214092.21.peg.581"/>
<dbReference type="eggNOG" id="COG4232">
    <property type="taxonomic scope" value="Bacteria"/>
</dbReference>
<dbReference type="HOGENOM" id="CLU_014657_3_0_6"/>
<dbReference type="OMA" id="WPIIPMT"/>
<dbReference type="OrthoDB" id="9811036at2"/>
<dbReference type="Proteomes" id="UP000000815">
    <property type="component" value="Chromosome"/>
</dbReference>
<dbReference type="Proteomes" id="UP000001019">
    <property type="component" value="Chromosome"/>
</dbReference>
<dbReference type="Proteomes" id="UP000002490">
    <property type="component" value="Chromosome"/>
</dbReference>
<dbReference type="GO" id="GO:0005886">
    <property type="term" value="C:plasma membrane"/>
    <property type="evidence" value="ECO:0007669"/>
    <property type="project" value="UniProtKB-SubCell"/>
</dbReference>
<dbReference type="GO" id="GO:0009055">
    <property type="term" value="F:electron transfer activity"/>
    <property type="evidence" value="ECO:0007669"/>
    <property type="project" value="UniProtKB-UniRule"/>
</dbReference>
<dbReference type="GO" id="GO:0047134">
    <property type="term" value="F:protein-disulfide reductase [NAD(P)H] activity"/>
    <property type="evidence" value="ECO:0007669"/>
    <property type="project" value="UniProtKB-UniRule"/>
</dbReference>
<dbReference type="GO" id="GO:0015035">
    <property type="term" value="F:protein-disulfide reductase activity"/>
    <property type="evidence" value="ECO:0000318"/>
    <property type="project" value="GO_Central"/>
</dbReference>
<dbReference type="GO" id="GO:0045454">
    <property type="term" value="P:cell redox homeostasis"/>
    <property type="evidence" value="ECO:0000318"/>
    <property type="project" value="GO_Central"/>
</dbReference>
<dbReference type="GO" id="GO:0017004">
    <property type="term" value="P:cytochrome complex assembly"/>
    <property type="evidence" value="ECO:0007669"/>
    <property type="project" value="UniProtKB-UniRule"/>
</dbReference>
<dbReference type="CDD" id="cd02953">
    <property type="entry name" value="DsbDgamma"/>
    <property type="match status" value="1"/>
</dbReference>
<dbReference type="FunFam" id="2.60.40.1250:FF:000001">
    <property type="entry name" value="Thiol:disulfide interchange protein DsbD"/>
    <property type="match status" value="1"/>
</dbReference>
<dbReference type="FunFam" id="3.40.30.10:FF:000116">
    <property type="entry name" value="Thiol:disulfide interchange protein DsbD"/>
    <property type="match status" value="1"/>
</dbReference>
<dbReference type="Gene3D" id="3.40.30.10">
    <property type="entry name" value="Glutaredoxin"/>
    <property type="match status" value="1"/>
</dbReference>
<dbReference type="Gene3D" id="2.60.40.1250">
    <property type="entry name" value="Thiol:disulfide interchange protein DsbD, N-terminal domain"/>
    <property type="match status" value="1"/>
</dbReference>
<dbReference type="HAMAP" id="MF_00399">
    <property type="entry name" value="DbsD"/>
    <property type="match status" value="1"/>
</dbReference>
<dbReference type="InterPro" id="IPR003834">
    <property type="entry name" value="Cyt_c_assmbl_TM_dom"/>
</dbReference>
<dbReference type="InterPro" id="IPR035671">
    <property type="entry name" value="DsbD_gamma"/>
</dbReference>
<dbReference type="InterPro" id="IPR028250">
    <property type="entry name" value="DsbDN"/>
</dbReference>
<dbReference type="InterPro" id="IPR036929">
    <property type="entry name" value="DsbDN_sf"/>
</dbReference>
<dbReference type="InterPro" id="IPR022910">
    <property type="entry name" value="Thiol_diS_interchange_DbsD"/>
</dbReference>
<dbReference type="InterPro" id="IPR012336">
    <property type="entry name" value="Thioredoxin-like_fold"/>
</dbReference>
<dbReference type="InterPro" id="IPR036249">
    <property type="entry name" value="Thioredoxin-like_sf"/>
</dbReference>
<dbReference type="InterPro" id="IPR017937">
    <property type="entry name" value="Thioredoxin_CS"/>
</dbReference>
<dbReference type="InterPro" id="IPR013766">
    <property type="entry name" value="Thioredoxin_domain"/>
</dbReference>
<dbReference type="NCBIfam" id="NF001419">
    <property type="entry name" value="PRK00293.1"/>
    <property type="match status" value="1"/>
</dbReference>
<dbReference type="PANTHER" id="PTHR32234">
    <property type="entry name" value="THIOL:DISULFIDE INTERCHANGE PROTEIN DSBD"/>
    <property type="match status" value="1"/>
</dbReference>
<dbReference type="PANTHER" id="PTHR32234:SF0">
    <property type="entry name" value="THIOL:DISULFIDE INTERCHANGE PROTEIN DSBD"/>
    <property type="match status" value="1"/>
</dbReference>
<dbReference type="Pfam" id="PF11412">
    <property type="entry name" value="DsbD_N"/>
    <property type="match status" value="1"/>
</dbReference>
<dbReference type="Pfam" id="PF02683">
    <property type="entry name" value="DsbD_TM"/>
    <property type="match status" value="1"/>
</dbReference>
<dbReference type="Pfam" id="PF13098">
    <property type="entry name" value="Thioredoxin_2"/>
    <property type="match status" value="1"/>
</dbReference>
<dbReference type="SUPFAM" id="SSF74863">
    <property type="entry name" value="Thiol:disulfide interchange protein DsbD, N-terminal domain (DsbD-alpha)"/>
    <property type="match status" value="1"/>
</dbReference>
<dbReference type="SUPFAM" id="SSF52833">
    <property type="entry name" value="Thioredoxin-like"/>
    <property type="match status" value="1"/>
</dbReference>
<dbReference type="PROSITE" id="PS00194">
    <property type="entry name" value="THIOREDOXIN_1"/>
    <property type="match status" value="1"/>
</dbReference>
<dbReference type="PROSITE" id="PS51352">
    <property type="entry name" value="THIOREDOXIN_2"/>
    <property type="match status" value="1"/>
</dbReference>
<protein>
    <recommendedName>
        <fullName evidence="1">Thiol:disulfide interchange protein DsbD</fullName>
        <ecNumber evidence="1">1.8.1.8</ecNumber>
    </recommendedName>
    <alternativeName>
        <fullName evidence="1">Protein-disulfide reductase</fullName>
        <shortName evidence="1">Disulfide reductase</shortName>
    </alternativeName>
</protein>
<organism>
    <name type="scientific">Yersinia pestis</name>
    <dbReference type="NCBI Taxonomy" id="632"/>
    <lineage>
        <taxon>Bacteria</taxon>
        <taxon>Pseudomonadati</taxon>
        <taxon>Pseudomonadota</taxon>
        <taxon>Gammaproteobacteria</taxon>
        <taxon>Enterobacterales</taxon>
        <taxon>Yersiniaceae</taxon>
        <taxon>Yersinia</taxon>
    </lineage>
</organism>
<sequence>MAQRFITLILLLCSVLLAPHSAQSSLFGENASFGTKNSQSRFIPVDQAFAFDFHQQGDQLNLSWQIHPGYYLYRQQIKIVPQQAALGAFTLPEGITHHDEFYGEVEIFKQQLTLKIPITQAAEQASVSVTYQGCAEAGFCYPPETRVIPLDVVVAASTASGTAAVNSSATVNPPATTQPEGDATPVPSTLPFSPLWALLIGIGIAFTPCVLPMYPLISAVILGREKPHSQRRILILAVVYVQGMALTYTLLGLVVAAAGLQFQAALQHPYVLIGLSVLFVLLALSMFGLYSLQLPSSLQTRLTQWSNSQRGGSLAGVFAMGALAGLICSPCTTAPLSAILLYIAQSGNMLAGGGTLYLYALGMGIPLVVVTLFGNKLIPRSGPWMQYVKEAFGFVILALPVFLLERVLGDVWGLRLWSLLAVAFFGWAFVLSLKAHAGWVRVCQLLLLAALLIVARPLQDWAFNGNTQQNAVKHINFQPVANLPQLQAVLAQAQGKPVMLDLYADWCVACKEFEKYTFSDDKVQRQLANTLLLQADVTANNAEHATLLKKFNVLGLPTILFFDSQGNEITAARVTGFMDAAQFLQHLQNTPAVTK</sequence>